<proteinExistence type="predicted"/>
<protein>
    <recommendedName>
        <fullName evidence="2">Protein npp-24</fullName>
    </recommendedName>
</protein>
<feature type="chain" id="PRO_0000065506" description="Protein npp-24">
    <location>
        <begin position="1"/>
        <end position="655"/>
    </location>
</feature>
<feature type="transmembrane region" description="Helical" evidence="1">
    <location>
        <begin position="263"/>
        <end position="283"/>
    </location>
</feature>
<sequence length="655" mass="74022">MLITHLIDSLSDRAVITPLTPTSVIIYDKNELKVYVGFTNNRNSLEYTKEVVLLLSTEIPKKAEIREIIVSKNGDYVILEGPRSLFVVRIGAEILVAKPDRLPSECFCECYPLHDSLLLQNISLSVVKVRLLPEKCDEKTFVTAVLFSDNCIRFYNLQKKFDSLLLAVDFRNHLHQVHDENVANNTFGLQKALVSFDLIPPKPNTSHFSIISIDSDCDFYTSFVHFSCFKEGYAPRIHRIEPVDGLPCDPLDLRYIQTTNPRICSVFVLVSGGGVLSHLVVFPNEFGEFRFLVKDQLRLPSSNGDPRIVQNQIRSLKVSRYEIATSSSLFSVNIFPWFEALTSISPTSTLEKETRVSELVDAVIPSDELSNTTKWTGARALRAVSVQLTQSLATEEEELLPESENIMHLVILENKDGQPAHLFNISTFDNIWSTENKTSFGRDSVSQPPMKSTGSLEQQLAALKPLAACVISEKVSCEEAIDAAMKFFDAVDERLKKHCEISKLFVERCLAVSSSAQALDEKQQSVDQRLIEETNTVEELKIRMHETKERMEGARKGINVLFHRVDENVPLSDNEIRIFERLKEHQKMLSDMTKLVPKMTLDSNEIHRMANIVLKKRGTGEEQNRFAAVEKNATEIESLEARENKLNTGISELSI</sequence>
<comment type="subcellular location">
    <subcellularLocation>
        <location evidence="2">Membrane</location>
        <topology evidence="2">Single-pass membrane protein</topology>
    </subcellularLocation>
</comment>
<reference key="1">
    <citation type="journal article" date="1998" name="Science">
        <title>Genome sequence of the nematode C. elegans: a platform for investigating biology.</title>
        <authorList>
            <consortium name="The C. elegans sequencing consortium"/>
        </authorList>
    </citation>
    <scope>NUCLEOTIDE SEQUENCE [LARGE SCALE GENOMIC DNA]</scope>
    <source>
        <strain>Bristol N2</strain>
    </source>
</reference>
<dbReference type="EMBL" id="BX284602">
    <property type="protein sequence ID" value="CCD64857.1"/>
    <property type="molecule type" value="Genomic_DNA"/>
</dbReference>
<dbReference type="RefSeq" id="NP_001033342.1">
    <property type="nucleotide sequence ID" value="NM_001038253.3"/>
</dbReference>
<dbReference type="RefSeq" id="NP_001379685.1">
    <property type="nucleotide sequence ID" value="NM_001393071.1"/>
</dbReference>
<dbReference type="SMR" id="Q09372"/>
<dbReference type="BioGRID" id="532148">
    <property type="interactions" value="1"/>
</dbReference>
<dbReference type="FunCoup" id="Q09372">
    <property type="interactions" value="138"/>
</dbReference>
<dbReference type="STRING" id="6239.ZK177.4.1"/>
<dbReference type="PaxDb" id="6239-ZK177.4.2"/>
<dbReference type="PeptideAtlas" id="Q09372"/>
<dbReference type="EnsemblMetazoa" id="ZK177.4.1">
    <property type="protein sequence ID" value="ZK177.4.1"/>
    <property type="gene ID" value="WBGene00022672"/>
</dbReference>
<dbReference type="EnsemblMetazoa" id="ZK177.4.2">
    <property type="protein sequence ID" value="ZK177.4.2"/>
    <property type="gene ID" value="WBGene00022672"/>
</dbReference>
<dbReference type="EnsemblMetazoa" id="ZK177.4.3">
    <property type="protein sequence ID" value="ZK177.4.3"/>
    <property type="gene ID" value="WBGene00022672"/>
</dbReference>
<dbReference type="GeneID" id="3564830"/>
<dbReference type="UCSC" id="ZK177.4.1">
    <property type="organism name" value="c. elegans"/>
</dbReference>
<dbReference type="AGR" id="WB:WBGene00022672"/>
<dbReference type="WormBase" id="ZK177.4">
    <property type="protein sequence ID" value="CE29069"/>
    <property type="gene ID" value="WBGene00022672"/>
    <property type="gene designation" value="npp-24"/>
</dbReference>
<dbReference type="eggNOG" id="KOG0159">
    <property type="taxonomic scope" value="Eukaryota"/>
</dbReference>
<dbReference type="HOGENOM" id="CLU_418714_0_0_1"/>
<dbReference type="InParanoid" id="Q09372"/>
<dbReference type="OMA" id="SIDINPW"/>
<dbReference type="OrthoDB" id="5823806at2759"/>
<dbReference type="PRO" id="PR:Q09372"/>
<dbReference type="Proteomes" id="UP000001940">
    <property type="component" value="Chromosome II"/>
</dbReference>
<dbReference type="Bgee" id="WBGene00022672">
    <property type="expression patterns" value="Expressed in germ line (C elegans) and 4 other cell types or tissues"/>
</dbReference>
<dbReference type="GO" id="GO:0016020">
    <property type="term" value="C:membrane"/>
    <property type="evidence" value="ECO:0007669"/>
    <property type="project" value="UniProtKB-SubCell"/>
</dbReference>
<dbReference type="InterPro" id="IPR019321">
    <property type="entry name" value="Nucleoporin_Nup88"/>
</dbReference>
<dbReference type="Pfam" id="PF10168">
    <property type="entry name" value="Nup88"/>
    <property type="match status" value="1"/>
</dbReference>
<accession>Q09372</accession>
<gene>
    <name evidence="3" type="primary">npp-24</name>
    <name evidence="3" type="ORF">ZK177.4</name>
</gene>
<name>NPP24_CAEEL</name>
<evidence type="ECO:0000255" key="1"/>
<evidence type="ECO:0000305" key="2"/>
<evidence type="ECO:0000312" key="3">
    <source>
        <dbReference type="WormBase" id="ZK177.4"/>
    </source>
</evidence>
<keyword id="KW-0472">Membrane</keyword>
<keyword id="KW-1185">Reference proteome</keyword>
<keyword id="KW-0812">Transmembrane</keyword>
<keyword id="KW-1133">Transmembrane helix</keyword>
<organism>
    <name type="scientific">Caenorhabditis elegans</name>
    <dbReference type="NCBI Taxonomy" id="6239"/>
    <lineage>
        <taxon>Eukaryota</taxon>
        <taxon>Metazoa</taxon>
        <taxon>Ecdysozoa</taxon>
        <taxon>Nematoda</taxon>
        <taxon>Chromadorea</taxon>
        <taxon>Rhabditida</taxon>
        <taxon>Rhabditina</taxon>
        <taxon>Rhabditomorpha</taxon>
        <taxon>Rhabditoidea</taxon>
        <taxon>Rhabditidae</taxon>
        <taxon>Peloderinae</taxon>
        <taxon>Caenorhabditis</taxon>
    </lineage>
</organism>